<protein>
    <recommendedName>
        <fullName>Coiled-coil domain-containing protein 107</fullName>
    </recommendedName>
</protein>
<keyword id="KW-0025">Alternative splicing</keyword>
<keyword id="KW-0175">Coiled coil</keyword>
<keyword id="KW-0472">Membrane</keyword>
<keyword id="KW-1185">Reference proteome</keyword>
<keyword id="KW-0732">Signal</keyword>
<keyword id="KW-0812">Transmembrane</keyword>
<keyword id="KW-1133">Transmembrane helix</keyword>
<sequence length="242" mass="26579">MEGAGPVLSILGLLLVSAPFGVLGERPSADLGAHPERGSQVSPGTTEPRRQPPPKDQRERARAGSLSLGALYTAAVVAFVLFKCLQGPDEAAVLREEKNKKKSSQSEQQLVQLTQQLAQTEQHLNHLMTQLDPLFEQVTTLVGTQRELLDTKLKTIHHLLQDCQPGTGVEVPEPEASIPFTEDLGKEDQEAGNSQAWEEPITWSPETRNLAPSWEVEQGLRRRWHKTVTKGPAVNGEQPLKV</sequence>
<proteinExistence type="evidence at transcript level"/>
<feature type="signal peptide" evidence="1">
    <location>
        <begin position="1"/>
        <end position="24"/>
    </location>
</feature>
<feature type="chain" id="PRO_0000282408" description="Coiled-coil domain-containing protein 107">
    <location>
        <begin position="25"/>
        <end position="242"/>
    </location>
</feature>
<feature type="transmembrane region" description="Helical" evidence="1">
    <location>
        <begin position="65"/>
        <end position="85"/>
    </location>
</feature>
<feature type="region of interest" description="Disordered" evidence="2">
    <location>
        <begin position="27"/>
        <end position="62"/>
    </location>
</feature>
<feature type="region of interest" description="Disordered" evidence="2">
    <location>
        <begin position="186"/>
        <end position="210"/>
    </location>
</feature>
<feature type="coiled-coil region" evidence="1">
    <location>
        <begin position="97"/>
        <end position="132"/>
    </location>
</feature>
<feature type="compositionally biased region" description="Basic and acidic residues" evidence="2">
    <location>
        <begin position="47"/>
        <end position="62"/>
    </location>
</feature>
<feature type="splice variant" id="VSP_024134" description="In isoform 2." evidence="3">
    <original>P</original>
    <variation>PGKRLGGFYGWRAMAVKLEQVGLSFT</variation>
    <location>
        <position position="174"/>
    </location>
</feature>
<accession>Q9DCC3</accession>
<accession>A2AIN4</accession>
<accession>Q9CTB6</accession>
<comment type="subcellular location">
    <subcellularLocation>
        <location evidence="3">Membrane</location>
        <topology evidence="3">Single-pass membrane protein</topology>
    </subcellularLocation>
</comment>
<comment type="alternative products">
    <event type="alternative splicing"/>
    <isoform>
        <id>Q9DCC3-1</id>
        <name>1</name>
        <sequence type="displayed"/>
    </isoform>
    <isoform>
        <id>Q9DCC3-2</id>
        <name>2</name>
        <sequence type="described" ref="VSP_024134"/>
    </isoform>
</comment>
<comment type="sequence caution" evidence="3">
    <conflict type="frameshift">
        <sequence resource="EMBL-CDS" id="BAB23140"/>
    </conflict>
</comment>
<organism>
    <name type="scientific">Mus musculus</name>
    <name type="common">Mouse</name>
    <dbReference type="NCBI Taxonomy" id="10090"/>
    <lineage>
        <taxon>Eukaryota</taxon>
        <taxon>Metazoa</taxon>
        <taxon>Chordata</taxon>
        <taxon>Craniata</taxon>
        <taxon>Vertebrata</taxon>
        <taxon>Euteleostomi</taxon>
        <taxon>Mammalia</taxon>
        <taxon>Eutheria</taxon>
        <taxon>Euarchontoglires</taxon>
        <taxon>Glires</taxon>
        <taxon>Rodentia</taxon>
        <taxon>Myomorpha</taxon>
        <taxon>Muroidea</taxon>
        <taxon>Muridae</taxon>
        <taxon>Murinae</taxon>
        <taxon>Mus</taxon>
        <taxon>Mus</taxon>
    </lineage>
</organism>
<evidence type="ECO:0000255" key="1"/>
<evidence type="ECO:0000256" key="2">
    <source>
        <dbReference type="SAM" id="MobiDB-lite"/>
    </source>
</evidence>
<evidence type="ECO:0000305" key="3"/>
<reference key="1">
    <citation type="journal article" date="2005" name="Science">
        <title>The transcriptional landscape of the mammalian genome.</title>
        <authorList>
            <person name="Carninci P."/>
            <person name="Kasukawa T."/>
            <person name="Katayama S."/>
            <person name="Gough J."/>
            <person name="Frith M.C."/>
            <person name="Maeda N."/>
            <person name="Oyama R."/>
            <person name="Ravasi T."/>
            <person name="Lenhard B."/>
            <person name="Wells C."/>
            <person name="Kodzius R."/>
            <person name="Shimokawa K."/>
            <person name="Bajic V.B."/>
            <person name="Brenner S.E."/>
            <person name="Batalov S."/>
            <person name="Forrest A.R."/>
            <person name="Zavolan M."/>
            <person name="Davis M.J."/>
            <person name="Wilming L.G."/>
            <person name="Aidinis V."/>
            <person name="Allen J.E."/>
            <person name="Ambesi-Impiombato A."/>
            <person name="Apweiler R."/>
            <person name="Aturaliya R.N."/>
            <person name="Bailey T.L."/>
            <person name="Bansal M."/>
            <person name="Baxter L."/>
            <person name="Beisel K.W."/>
            <person name="Bersano T."/>
            <person name="Bono H."/>
            <person name="Chalk A.M."/>
            <person name="Chiu K.P."/>
            <person name="Choudhary V."/>
            <person name="Christoffels A."/>
            <person name="Clutterbuck D.R."/>
            <person name="Crowe M.L."/>
            <person name="Dalla E."/>
            <person name="Dalrymple B.P."/>
            <person name="de Bono B."/>
            <person name="Della Gatta G."/>
            <person name="di Bernardo D."/>
            <person name="Down T."/>
            <person name="Engstrom P."/>
            <person name="Fagiolini M."/>
            <person name="Faulkner G."/>
            <person name="Fletcher C.F."/>
            <person name="Fukushima T."/>
            <person name="Furuno M."/>
            <person name="Futaki S."/>
            <person name="Gariboldi M."/>
            <person name="Georgii-Hemming P."/>
            <person name="Gingeras T.R."/>
            <person name="Gojobori T."/>
            <person name="Green R.E."/>
            <person name="Gustincich S."/>
            <person name="Harbers M."/>
            <person name="Hayashi Y."/>
            <person name="Hensch T.K."/>
            <person name="Hirokawa N."/>
            <person name="Hill D."/>
            <person name="Huminiecki L."/>
            <person name="Iacono M."/>
            <person name="Ikeo K."/>
            <person name="Iwama A."/>
            <person name="Ishikawa T."/>
            <person name="Jakt M."/>
            <person name="Kanapin A."/>
            <person name="Katoh M."/>
            <person name="Kawasawa Y."/>
            <person name="Kelso J."/>
            <person name="Kitamura H."/>
            <person name="Kitano H."/>
            <person name="Kollias G."/>
            <person name="Krishnan S.P."/>
            <person name="Kruger A."/>
            <person name="Kummerfeld S.K."/>
            <person name="Kurochkin I.V."/>
            <person name="Lareau L.F."/>
            <person name="Lazarevic D."/>
            <person name="Lipovich L."/>
            <person name="Liu J."/>
            <person name="Liuni S."/>
            <person name="McWilliam S."/>
            <person name="Madan Babu M."/>
            <person name="Madera M."/>
            <person name="Marchionni L."/>
            <person name="Matsuda H."/>
            <person name="Matsuzawa S."/>
            <person name="Miki H."/>
            <person name="Mignone F."/>
            <person name="Miyake S."/>
            <person name="Morris K."/>
            <person name="Mottagui-Tabar S."/>
            <person name="Mulder N."/>
            <person name="Nakano N."/>
            <person name="Nakauchi H."/>
            <person name="Ng P."/>
            <person name="Nilsson R."/>
            <person name="Nishiguchi S."/>
            <person name="Nishikawa S."/>
            <person name="Nori F."/>
            <person name="Ohara O."/>
            <person name="Okazaki Y."/>
            <person name="Orlando V."/>
            <person name="Pang K.C."/>
            <person name="Pavan W.J."/>
            <person name="Pavesi G."/>
            <person name="Pesole G."/>
            <person name="Petrovsky N."/>
            <person name="Piazza S."/>
            <person name="Reed J."/>
            <person name="Reid J.F."/>
            <person name="Ring B.Z."/>
            <person name="Ringwald M."/>
            <person name="Rost B."/>
            <person name="Ruan Y."/>
            <person name="Salzberg S.L."/>
            <person name="Sandelin A."/>
            <person name="Schneider C."/>
            <person name="Schoenbach C."/>
            <person name="Sekiguchi K."/>
            <person name="Semple C.A."/>
            <person name="Seno S."/>
            <person name="Sessa L."/>
            <person name="Sheng Y."/>
            <person name="Shibata Y."/>
            <person name="Shimada H."/>
            <person name="Shimada K."/>
            <person name="Silva D."/>
            <person name="Sinclair B."/>
            <person name="Sperling S."/>
            <person name="Stupka E."/>
            <person name="Sugiura K."/>
            <person name="Sultana R."/>
            <person name="Takenaka Y."/>
            <person name="Taki K."/>
            <person name="Tammoja K."/>
            <person name="Tan S.L."/>
            <person name="Tang S."/>
            <person name="Taylor M.S."/>
            <person name="Tegner J."/>
            <person name="Teichmann S.A."/>
            <person name="Ueda H.R."/>
            <person name="van Nimwegen E."/>
            <person name="Verardo R."/>
            <person name="Wei C.L."/>
            <person name="Yagi K."/>
            <person name="Yamanishi H."/>
            <person name="Zabarovsky E."/>
            <person name="Zhu S."/>
            <person name="Zimmer A."/>
            <person name="Hide W."/>
            <person name="Bult C."/>
            <person name="Grimmond S.M."/>
            <person name="Teasdale R.D."/>
            <person name="Liu E.T."/>
            <person name="Brusic V."/>
            <person name="Quackenbush J."/>
            <person name="Wahlestedt C."/>
            <person name="Mattick J.S."/>
            <person name="Hume D.A."/>
            <person name="Kai C."/>
            <person name="Sasaki D."/>
            <person name="Tomaru Y."/>
            <person name="Fukuda S."/>
            <person name="Kanamori-Katayama M."/>
            <person name="Suzuki M."/>
            <person name="Aoki J."/>
            <person name="Arakawa T."/>
            <person name="Iida J."/>
            <person name="Imamura K."/>
            <person name="Itoh M."/>
            <person name="Kato T."/>
            <person name="Kawaji H."/>
            <person name="Kawagashira N."/>
            <person name="Kawashima T."/>
            <person name="Kojima M."/>
            <person name="Kondo S."/>
            <person name="Konno H."/>
            <person name="Nakano K."/>
            <person name="Ninomiya N."/>
            <person name="Nishio T."/>
            <person name="Okada M."/>
            <person name="Plessy C."/>
            <person name="Shibata K."/>
            <person name="Shiraki T."/>
            <person name="Suzuki S."/>
            <person name="Tagami M."/>
            <person name="Waki K."/>
            <person name="Watahiki A."/>
            <person name="Okamura-Oho Y."/>
            <person name="Suzuki H."/>
            <person name="Kawai J."/>
            <person name="Hayashizaki Y."/>
        </authorList>
    </citation>
    <scope>NUCLEOTIDE SEQUENCE [LARGE SCALE MRNA] (ISOFORM 1)</scope>
    <source>
        <strain>C57BL/6J</strain>
        <tissue>Embryo</tissue>
        <tissue>Kidney</tissue>
    </source>
</reference>
<reference key="2">
    <citation type="journal article" date="2009" name="PLoS Biol.">
        <title>Lineage-specific biology revealed by a finished genome assembly of the mouse.</title>
        <authorList>
            <person name="Church D.M."/>
            <person name="Goodstadt L."/>
            <person name="Hillier L.W."/>
            <person name="Zody M.C."/>
            <person name="Goldstein S."/>
            <person name="She X."/>
            <person name="Bult C.J."/>
            <person name="Agarwala R."/>
            <person name="Cherry J.L."/>
            <person name="DiCuccio M."/>
            <person name="Hlavina W."/>
            <person name="Kapustin Y."/>
            <person name="Meric P."/>
            <person name="Maglott D."/>
            <person name="Birtle Z."/>
            <person name="Marques A.C."/>
            <person name="Graves T."/>
            <person name="Zhou S."/>
            <person name="Teague B."/>
            <person name="Potamousis K."/>
            <person name="Churas C."/>
            <person name="Place M."/>
            <person name="Herschleb J."/>
            <person name="Runnheim R."/>
            <person name="Forrest D."/>
            <person name="Amos-Landgraf J."/>
            <person name="Schwartz D.C."/>
            <person name="Cheng Z."/>
            <person name="Lindblad-Toh K."/>
            <person name="Eichler E.E."/>
            <person name="Ponting C.P."/>
        </authorList>
    </citation>
    <scope>NUCLEOTIDE SEQUENCE [LARGE SCALE GENOMIC DNA]</scope>
    <source>
        <strain>C57BL/6J</strain>
    </source>
</reference>
<reference key="3">
    <citation type="journal article" date="2004" name="Genome Res.">
        <title>The status, quality, and expansion of the NIH full-length cDNA project: the Mammalian Gene Collection (MGC).</title>
        <authorList>
            <consortium name="The MGC Project Team"/>
        </authorList>
    </citation>
    <scope>NUCLEOTIDE SEQUENCE [LARGE SCALE MRNA] (ISOFORM 1)</scope>
    <source>
        <strain>FVB/N</strain>
        <tissue>Kidney</tissue>
    </source>
</reference>
<gene>
    <name type="primary">Ccdc107</name>
</gene>
<name>CC107_MOUSE</name>
<dbReference type="EMBL" id="AK002915">
    <property type="protein sequence ID" value="BAB22454.1"/>
    <property type="molecule type" value="mRNA"/>
</dbReference>
<dbReference type="EMBL" id="AK004044">
    <property type="protein sequence ID" value="BAB23140.1"/>
    <property type="status" value="ALT_FRAME"/>
    <property type="molecule type" value="mRNA"/>
</dbReference>
<dbReference type="EMBL" id="AL732506">
    <property type="status" value="NOT_ANNOTATED_CDS"/>
    <property type="molecule type" value="Genomic_DNA"/>
</dbReference>
<dbReference type="EMBL" id="BC027414">
    <property type="protein sequence ID" value="AAH27414.1"/>
    <property type="molecule type" value="mRNA"/>
</dbReference>
<dbReference type="CCDS" id="CCDS18097.1">
    <molecule id="Q9DCC3-1"/>
</dbReference>
<dbReference type="RefSeq" id="NP_001033002.1">
    <molecule id="Q9DCC3-1"/>
    <property type="nucleotide sequence ID" value="NM_001037913.2"/>
</dbReference>
<dbReference type="RefSeq" id="XP_006538201.1">
    <property type="nucleotide sequence ID" value="XM_006538138.2"/>
</dbReference>
<dbReference type="SMR" id="Q9DCC3"/>
<dbReference type="BioGRID" id="549232">
    <property type="interactions" value="1"/>
</dbReference>
<dbReference type="FunCoup" id="Q9DCC3">
    <property type="interactions" value="2"/>
</dbReference>
<dbReference type="STRING" id="10090.ENSMUSP00000030181"/>
<dbReference type="iPTMnet" id="Q9DCC3"/>
<dbReference type="PhosphoSitePlus" id="Q9DCC3"/>
<dbReference type="PaxDb" id="10090-ENSMUSP00000030181"/>
<dbReference type="ProteomicsDB" id="281482">
    <molecule id="Q9DCC3-1"/>
</dbReference>
<dbReference type="ProteomicsDB" id="281483">
    <molecule id="Q9DCC3-2"/>
</dbReference>
<dbReference type="Antibodypedia" id="51334">
    <property type="antibodies" value="58 antibodies from 14 providers"/>
</dbReference>
<dbReference type="Ensembl" id="ENSMUST00000030181.12">
    <molecule id="Q9DCC3-1"/>
    <property type="protein sequence ID" value="ENSMUSP00000030181.6"/>
    <property type="gene ID" value="ENSMUSG00000028461.13"/>
</dbReference>
<dbReference type="Ensembl" id="ENSMUST00000107922.3">
    <molecule id="Q9DCC3-2"/>
    <property type="protein sequence ID" value="ENSMUSP00000103555.3"/>
    <property type="gene ID" value="ENSMUSG00000028461.13"/>
</dbReference>
<dbReference type="GeneID" id="622404"/>
<dbReference type="KEGG" id="mmu:622404"/>
<dbReference type="UCSC" id="uc008spy.2">
    <molecule id="Q9DCC3-1"/>
    <property type="organism name" value="mouse"/>
</dbReference>
<dbReference type="AGR" id="MGI:1913423"/>
<dbReference type="CTD" id="203260"/>
<dbReference type="MGI" id="MGI:1913423">
    <property type="gene designation" value="Ccdc107"/>
</dbReference>
<dbReference type="VEuPathDB" id="HostDB:ENSMUSG00000028461"/>
<dbReference type="eggNOG" id="ENOG502QQ24">
    <property type="taxonomic scope" value="Eukaryota"/>
</dbReference>
<dbReference type="GeneTree" id="ENSGT00390000018608"/>
<dbReference type="HOGENOM" id="CLU_097023_0_0_1"/>
<dbReference type="InParanoid" id="Q9DCC3"/>
<dbReference type="OMA" id="NQAWEEP"/>
<dbReference type="OrthoDB" id="82795at9989"/>
<dbReference type="PhylomeDB" id="Q9DCC3"/>
<dbReference type="TreeFam" id="TF333319"/>
<dbReference type="BioGRID-ORCS" id="622404">
    <property type="hits" value="3 hits in 76 CRISPR screens"/>
</dbReference>
<dbReference type="ChiTaRS" id="Ccdc107">
    <property type="organism name" value="mouse"/>
</dbReference>
<dbReference type="PRO" id="PR:Q9DCC3"/>
<dbReference type="Proteomes" id="UP000000589">
    <property type="component" value="Chromosome 4"/>
</dbReference>
<dbReference type="RNAct" id="Q9DCC3">
    <property type="molecule type" value="protein"/>
</dbReference>
<dbReference type="Bgee" id="ENSMUSG00000028461">
    <property type="expression patterns" value="Expressed in right kidney and 252 other cell types or tissues"/>
</dbReference>
<dbReference type="GO" id="GO:0016020">
    <property type="term" value="C:membrane"/>
    <property type="evidence" value="ECO:0007669"/>
    <property type="project" value="UniProtKB-SubCell"/>
</dbReference>
<dbReference type="InterPro" id="IPR038779">
    <property type="entry name" value="CCDC107"/>
</dbReference>
<dbReference type="PANTHER" id="PTHR37345">
    <property type="entry name" value="COILED-COIL DOMAIN-CONTAINING PROTEIN 107"/>
    <property type="match status" value="1"/>
</dbReference>
<dbReference type="PANTHER" id="PTHR37345:SF1">
    <property type="entry name" value="COILED-COIL DOMAIN-CONTAINING PROTEIN 107"/>
    <property type="match status" value="1"/>
</dbReference>